<feature type="chain" id="PRO_0000101883" description="UDP-N-acetylmuramoyl-L-alanyl-D-glutamate--2,6-diaminopimelate ligase">
    <location>
        <begin position="1"/>
        <end position="483"/>
    </location>
</feature>
<feature type="short sequence motif" description="Meso-diaminopimelate recognition motif">
    <location>
        <begin position="403"/>
        <end position="406"/>
    </location>
</feature>
<feature type="binding site" evidence="1">
    <location>
        <position position="30"/>
    </location>
    <ligand>
        <name>UDP-N-acetyl-alpha-D-muramoyl-L-alanyl-D-glutamate</name>
        <dbReference type="ChEBI" id="CHEBI:83900"/>
    </ligand>
</feature>
<feature type="binding site" evidence="1">
    <location>
        <begin position="109"/>
        <end position="115"/>
    </location>
    <ligand>
        <name>ATP</name>
        <dbReference type="ChEBI" id="CHEBI:30616"/>
    </ligand>
</feature>
<feature type="binding site" evidence="1">
    <location>
        <begin position="151"/>
        <end position="152"/>
    </location>
    <ligand>
        <name>UDP-N-acetyl-alpha-D-muramoyl-L-alanyl-D-glutamate</name>
        <dbReference type="ChEBI" id="CHEBI:83900"/>
    </ligand>
</feature>
<feature type="binding site" evidence="1">
    <location>
        <position position="178"/>
    </location>
    <ligand>
        <name>UDP-N-acetyl-alpha-D-muramoyl-L-alanyl-D-glutamate</name>
        <dbReference type="ChEBI" id="CHEBI:83900"/>
    </ligand>
</feature>
<feature type="binding site" evidence="1">
    <location>
        <position position="186"/>
    </location>
    <ligand>
        <name>UDP-N-acetyl-alpha-D-muramoyl-L-alanyl-D-glutamate</name>
        <dbReference type="ChEBI" id="CHEBI:83900"/>
    </ligand>
</feature>
<feature type="binding site" evidence="1">
    <location>
        <position position="380"/>
    </location>
    <ligand>
        <name>meso-2,6-diaminopimelate</name>
        <dbReference type="ChEBI" id="CHEBI:57791"/>
    </ligand>
</feature>
<feature type="binding site" evidence="1">
    <location>
        <begin position="403"/>
        <end position="406"/>
    </location>
    <ligand>
        <name>meso-2,6-diaminopimelate</name>
        <dbReference type="ChEBI" id="CHEBI:57791"/>
    </ligand>
</feature>
<feature type="binding site" evidence="1">
    <location>
        <position position="453"/>
    </location>
    <ligand>
        <name>meso-2,6-diaminopimelate</name>
        <dbReference type="ChEBI" id="CHEBI:57791"/>
    </ligand>
</feature>
<feature type="binding site" evidence="1">
    <location>
        <position position="457"/>
    </location>
    <ligand>
        <name>meso-2,6-diaminopimelate</name>
        <dbReference type="ChEBI" id="CHEBI:57791"/>
    </ligand>
</feature>
<feature type="modified residue" description="N6-carboxylysine" evidence="1">
    <location>
        <position position="218"/>
    </location>
</feature>
<protein>
    <recommendedName>
        <fullName evidence="1">UDP-N-acetylmuramoyl-L-alanyl-D-glutamate--2,6-diaminopimelate ligase</fullName>
        <ecNumber evidence="1">6.3.2.13</ecNumber>
    </recommendedName>
    <alternativeName>
        <fullName evidence="1">Meso-A2pm-adding enzyme</fullName>
    </alternativeName>
    <alternativeName>
        <fullName evidence="1">Meso-diaminopimelate-adding enzyme</fullName>
    </alternativeName>
    <alternativeName>
        <fullName evidence="1">UDP-MurNAc-L-Ala-D-Glu:meso-diaminopimelate ligase</fullName>
    </alternativeName>
    <alternativeName>
        <fullName evidence="1">UDP-MurNAc-tripeptide synthetase</fullName>
    </alternativeName>
    <alternativeName>
        <fullName evidence="1">UDP-N-acetylmuramyl-tripeptide synthetase</fullName>
    </alternativeName>
</protein>
<comment type="function">
    <text evidence="1">Catalyzes the addition of meso-diaminopimelic acid to the nucleotide precursor UDP-N-acetylmuramoyl-L-alanyl-D-glutamate (UMAG) in the biosynthesis of bacterial cell-wall peptidoglycan.</text>
</comment>
<comment type="catalytic activity">
    <reaction evidence="1">
        <text>UDP-N-acetyl-alpha-D-muramoyl-L-alanyl-D-glutamate + meso-2,6-diaminopimelate + ATP = UDP-N-acetyl-alpha-D-muramoyl-L-alanyl-gamma-D-glutamyl-meso-2,6-diaminopimelate + ADP + phosphate + H(+)</text>
        <dbReference type="Rhea" id="RHEA:23676"/>
        <dbReference type="ChEBI" id="CHEBI:15378"/>
        <dbReference type="ChEBI" id="CHEBI:30616"/>
        <dbReference type="ChEBI" id="CHEBI:43474"/>
        <dbReference type="ChEBI" id="CHEBI:57791"/>
        <dbReference type="ChEBI" id="CHEBI:83900"/>
        <dbReference type="ChEBI" id="CHEBI:83905"/>
        <dbReference type="ChEBI" id="CHEBI:456216"/>
        <dbReference type="EC" id="6.3.2.13"/>
    </reaction>
</comment>
<comment type="cofactor">
    <cofactor evidence="1">
        <name>Mg(2+)</name>
        <dbReference type="ChEBI" id="CHEBI:18420"/>
    </cofactor>
</comment>
<comment type="pathway">
    <text evidence="1">Cell wall biogenesis; peptidoglycan biosynthesis.</text>
</comment>
<comment type="subcellular location">
    <subcellularLocation>
        <location evidence="1">Cytoplasm</location>
    </subcellularLocation>
</comment>
<comment type="PTM">
    <text evidence="1">Carboxylation is probably crucial for Mg(2+) binding and, consequently, for the gamma-phosphate positioning of ATP.</text>
</comment>
<comment type="similarity">
    <text evidence="1">Belongs to the MurCDEF family. MurE subfamily.</text>
</comment>
<proteinExistence type="inferred from homology"/>
<organism>
    <name type="scientific">Chlamydia trachomatis serovar D (strain ATCC VR-885 / DSM 19411 / UW-3/Cx)</name>
    <dbReference type="NCBI Taxonomy" id="272561"/>
    <lineage>
        <taxon>Bacteria</taxon>
        <taxon>Pseudomonadati</taxon>
        <taxon>Chlamydiota</taxon>
        <taxon>Chlamydiia</taxon>
        <taxon>Chlamydiales</taxon>
        <taxon>Chlamydiaceae</taxon>
        <taxon>Chlamydia/Chlamydophila group</taxon>
        <taxon>Chlamydia</taxon>
    </lineage>
</organism>
<evidence type="ECO:0000255" key="1">
    <source>
        <dbReference type="HAMAP-Rule" id="MF_00208"/>
    </source>
</evidence>
<keyword id="KW-0067">ATP-binding</keyword>
<keyword id="KW-0131">Cell cycle</keyword>
<keyword id="KW-0132">Cell division</keyword>
<keyword id="KW-0133">Cell shape</keyword>
<keyword id="KW-0961">Cell wall biogenesis/degradation</keyword>
<keyword id="KW-0963">Cytoplasm</keyword>
<keyword id="KW-0436">Ligase</keyword>
<keyword id="KW-0460">Magnesium</keyword>
<keyword id="KW-0547">Nucleotide-binding</keyword>
<keyword id="KW-0573">Peptidoglycan synthesis</keyword>
<keyword id="KW-1185">Reference proteome</keyword>
<sequence>MHLDQLLQNIPAKIYGKVESIPVRNLTRDSRCVGVGDIFIARQGQFCNGNDYSSQAVANGAIAVLSSLYNPFLSVVQIIAEDPIALEASLAARFYNNPSRHLDVIGITGTNGKTTVSCLVRELMERSGRRTGLIGTIEHILGENRIIDSFTTPDAILLQKYFAEMVKQNLSAAVMEVSSIGMALGRVRETEFLAGVLTNITSDHLDFHGSLEEYIAAKKQFFASLPEKGIAVVNLDCEYAPSFLNGSQARAVSYAIHQEADYRADRLKLYSSGSSYDIWYQGQVFPCETSLIGEHNVYNVLASLAVVHQFLGRDFADLVRDVRFLSAPKGRLDPILLGPFPVYIDYAHTPDALDNVCRILLQLLPKDGRLIIVFGCGGDRDRVKRPLMAKVSEHYGFSFVTSDNPRTEDPDQIIADICKGFSTDHYVVESDRKLAIEKAISMASDKDIVLVAGKGHEGYQIFKHQTIVFDDREVVCEALAALC</sequence>
<dbReference type="EC" id="6.3.2.13" evidence="1"/>
<dbReference type="EMBL" id="AE001273">
    <property type="protein sequence ID" value="AAC67862.1"/>
    <property type="molecule type" value="Genomic_DNA"/>
</dbReference>
<dbReference type="PIR" id="B71537">
    <property type="entry name" value="B71537"/>
</dbReference>
<dbReference type="RefSeq" id="NP_219774.1">
    <property type="nucleotide sequence ID" value="NC_000117.1"/>
</dbReference>
<dbReference type="RefSeq" id="WP_009871616.1">
    <property type="nucleotide sequence ID" value="NC_000117.1"/>
</dbReference>
<dbReference type="SMR" id="O84271"/>
<dbReference type="FunCoup" id="O84271">
    <property type="interactions" value="260"/>
</dbReference>
<dbReference type="STRING" id="272561.CT_269"/>
<dbReference type="EnsemblBacteria" id="AAC67862">
    <property type="protein sequence ID" value="AAC67862"/>
    <property type="gene ID" value="CT_269"/>
</dbReference>
<dbReference type="GeneID" id="884854"/>
<dbReference type="KEGG" id="ctr:CT_269"/>
<dbReference type="PATRIC" id="fig|272561.5.peg.287"/>
<dbReference type="HOGENOM" id="CLU_022291_4_1_0"/>
<dbReference type="InParanoid" id="O84271"/>
<dbReference type="OrthoDB" id="9800958at2"/>
<dbReference type="UniPathway" id="UPA00219"/>
<dbReference type="Proteomes" id="UP000000431">
    <property type="component" value="Chromosome"/>
</dbReference>
<dbReference type="GO" id="GO:0005737">
    <property type="term" value="C:cytoplasm"/>
    <property type="evidence" value="ECO:0007669"/>
    <property type="project" value="UniProtKB-SubCell"/>
</dbReference>
<dbReference type="GO" id="GO:0005524">
    <property type="term" value="F:ATP binding"/>
    <property type="evidence" value="ECO:0007669"/>
    <property type="project" value="UniProtKB-UniRule"/>
</dbReference>
<dbReference type="GO" id="GO:0000287">
    <property type="term" value="F:magnesium ion binding"/>
    <property type="evidence" value="ECO:0007669"/>
    <property type="project" value="UniProtKB-UniRule"/>
</dbReference>
<dbReference type="GO" id="GO:0008765">
    <property type="term" value="F:UDP-N-acetylmuramoylalanyl-D-glutamate-2,6-diaminopimelate ligase activity"/>
    <property type="evidence" value="ECO:0007669"/>
    <property type="project" value="UniProtKB-UniRule"/>
</dbReference>
<dbReference type="GO" id="GO:0051301">
    <property type="term" value="P:cell division"/>
    <property type="evidence" value="ECO:0007669"/>
    <property type="project" value="UniProtKB-KW"/>
</dbReference>
<dbReference type="GO" id="GO:0071555">
    <property type="term" value="P:cell wall organization"/>
    <property type="evidence" value="ECO:0007669"/>
    <property type="project" value="UniProtKB-KW"/>
</dbReference>
<dbReference type="GO" id="GO:0009252">
    <property type="term" value="P:peptidoglycan biosynthetic process"/>
    <property type="evidence" value="ECO:0007669"/>
    <property type="project" value="UniProtKB-UniRule"/>
</dbReference>
<dbReference type="GO" id="GO:0008360">
    <property type="term" value="P:regulation of cell shape"/>
    <property type="evidence" value="ECO:0007669"/>
    <property type="project" value="UniProtKB-KW"/>
</dbReference>
<dbReference type="Gene3D" id="3.90.190.20">
    <property type="entry name" value="Mur ligase, C-terminal domain"/>
    <property type="match status" value="1"/>
</dbReference>
<dbReference type="Gene3D" id="3.40.1190.10">
    <property type="entry name" value="Mur-like, catalytic domain"/>
    <property type="match status" value="1"/>
</dbReference>
<dbReference type="Gene3D" id="3.40.1390.10">
    <property type="entry name" value="MurE/MurF, N-terminal domain"/>
    <property type="match status" value="1"/>
</dbReference>
<dbReference type="HAMAP" id="MF_00208">
    <property type="entry name" value="MurE"/>
    <property type="match status" value="1"/>
</dbReference>
<dbReference type="InterPro" id="IPR036565">
    <property type="entry name" value="Mur-like_cat_sf"/>
</dbReference>
<dbReference type="InterPro" id="IPR004101">
    <property type="entry name" value="Mur_ligase_C"/>
</dbReference>
<dbReference type="InterPro" id="IPR036615">
    <property type="entry name" value="Mur_ligase_C_dom_sf"/>
</dbReference>
<dbReference type="InterPro" id="IPR013221">
    <property type="entry name" value="Mur_ligase_cen"/>
</dbReference>
<dbReference type="InterPro" id="IPR035911">
    <property type="entry name" value="MurE/MurF_N"/>
</dbReference>
<dbReference type="InterPro" id="IPR005761">
    <property type="entry name" value="UDP-N-AcMur-Glu-dNH2Pim_ligase"/>
</dbReference>
<dbReference type="NCBIfam" id="TIGR01085">
    <property type="entry name" value="murE"/>
    <property type="match status" value="1"/>
</dbReference>
<dbReference type="NCBIfam" id="NF001126">
    <property type="entry name" value="PRK00139.1-4"/>
    <property type="match status" value="1"/>
</dbReference>
<dbReference type="PANTHER" id="PTHR23135">
    <property type="entry name" value="MUR LIGASE FAMILY MEMBER"/>
    <property type="match status" value="1"/>
</dbReference>
<dbReference type="PANTHER" id="PTHR23135:SF4">
    <property type="entry name" value="UDP-N-ACETYLMURAMOYL-L-ALANYL-D-GLUTAMATE--2,6-DIAMINOPIMELATE LIGASE MURE HOMOLOG, CHLOROPLASTIC"/>
    <property type="match status" value="1"/>
</dbReference>
<dbReference type="Pfam" id="PF02875">
    <property type="entry name" value="Mur_ligase_C"/>
    <property type="match status" value="1"/>
</dbReference>
<dbReference type="Pfam" id="PF08245">
    <property type="entry name" value="Mur_ligase_M"/>
    <property type="match status" value="1"/>
</dbReference>
<dbReference type="SUPFAM" id="SSF53623">
    <property type="entry name" value="MurD-like peptide ligases, catalytic domain"/>
    <property type="match status" value="1"/>
</dbReference>
<dbReference type="SUPFAM" id="SSF53244">
    <property type="entry name" value="MurD-like peptide ligases, peptide-binding domain"/>
    <property type="match status" value="1"/>
</dbReference>
<dbReference type="SUPFAM" id="SSF63418">
    <property type="entry name" value="MurE/MurF N-terminal domain"/>
    <property type="match status" value="1"/>
</dbReference>
<gene>
    <name evidence="1" type="primary">murE</name>
    <name type="ordered locus">CT_269</name>
</gene>
<accession>O84271</accession>
<name>MURE_CHLTR</name>
<reference key="1">
    <citation type="journal article" date="1998" name="Science">
        <title>Genome sequence of an obligate intracellular pathogen of humans: Chlamydia trachomatis.</title>
        <authorList>
            <person name="Stephens R.S."/>
            <person name="Kalman S."/>
            <person name="Lammel C.J."/>
            <person name="Fan J."/>
            <person name="Marathe R."/>
            <person name="Aravind L."/>
            <person name="Mitchell W.P."/>
            <person name="Olinger L."/>
            <person name="Tatusov R.L."/>
            <person name="Zhao Q."/>
            <person name="Koonin E.V."/>
            <person name="Davis R.W."/>
        </authorList>
    </citation>
    <scope>NUCLEOTIDE SEQUENCE [LARGE SCALE GENOMIC DNA]</scope>
    <source>
        <strain>ATCC VR-885 / DSM 19411 / UW-3/Cx</strain>
    </source>
</reference>